<dbReference type="EMBL" id="CU329672">
    <property type="protein sequence ID" value="CAA19313.1"/>
    <property type="molecule type" value="Genomic_DNA"/>
</dbReference>
<dbReference type="PIR" id="T41166">
    <property type="entry name" value="T41166"/>
</dbReference>
<dbReference type="RefSeq" id="NP_588551.1">
    <property type="nucleotide sequence ID" value="NM_001023538.2"/>
</dbReference>
<dbReference type="PDB" id="8ESQ">
    <property type="method" value="EM"/>
    <property type="resolution" value="2.80 A"/>
    <property type="chains" value="o=1-276"/>
</dbReference>
<dbReference type="PDB" id="8ESR">
    <property type="method" value="EM"/>
    <property type="resolution" value="3.20 A"/>
    <property type="chains" value="o=1-276"/>
</dbReference>
<dbReference type="PDB" id="8ETG">
    <property type="method" value="EM"/>
    <property type="resolution" value="3.40 A"/>
    <property type="chains" value="o=1-276"/>
</dbReference>
<dbReference type="PDB" id="8ETH">
    <property type="method" value="EM"/>
    <property type="resolution" value="3.80 A"/>
    <property type="chains" value="o=1-276"/>
</dbReference>
<dbReference type="PDB" id="8ETI">
    <property type="method" value="EM"/>
    <property type="resolution" value="3.70 A"/>
    <property type="chains" value="o=1-276"/>
</dbReference>
<dbReference type="PDB" id="8EUP">
    <property type="method" value="EM"/>
    <property type="resolution" value="3.10 A"/>
    <property type="chains" value="o=1-276"/>
</dbReference>
<dbReference type="PDB" id="8EUY">
    <property type="method" value="EM"/>
    <property type="resolution" value="3.00 A"/>
    <property type="chains" value="o=1-276"/>
</dbReference>
<dbReference type="PDB" id="8EV3">
    <property type="method" value="EM"/>
    <property type="resolution" value="3.00 A"/>
    <property type="chains" value="o=1-276"/>
</dbReference>
<dbReference type="PDBsum" id="8ESQ"/>
<dbReference type="PDBsum" id="8ESR"/>
<dbReference type="PDBsum" id="8ETG"/>
<dbReference type="PDBsum" id="8ETH"/>
<dbReference type="PDBsum" id="8ETI"/>
<dbReference type="PDBsum" id="8EUP"/>
<dbReference type="PDBsum" id="8EUY"/>
<dbReference type="PDBsum" id="8EV3"/>
<dbReference type="SMR" id="O74978"/>
<dbReference type="BioGRID" id="275954">
    <property type="interactions" value="8"/>
</dbReference>
<dbReference type="FunCoup" id="O74978">
    <property type="interactions" value="715"/>
</dbReference>
<dbReference type="STRING" id="284812.O74978"/>
<dbReference type="iPTMnet" id="O74978"/>
<dbReference type="PaxDb" id="4896-SPCC1827.05c.1"/>
<dbReference type="EnsemblFungi" id="SPCC1827.05c.1">
    <property type="protein sequence ID" value="SPCC1827.05c.1:pep"/>
    <property type="gene ID" value="SPCC1827.05c"/>
</dbReference>
<dbReference type="KEGG" id="spo:2539389"/>
<dbReference type="PomBase" id="SPCC1827.05c"/>
<dbReference type="VEuPathDB" id="FungiDB:SPCC1827.05c"/>
<dbReference type="eggNOG" id="KOG4208">
    <property type="taxonomic scope" value="Eukaryota"/>
</dbReference>
<dbReference type="HOGENOM" id="CLU_025741_0_1_1"/>
<dbReference type="InParanoid" id="O74978"/>
<dbReference type="OMA" id="QIHEEMF"/>
<dbReference type="PhylomeDB" id="O74978"/>
<dbReference type="PRO" id="PR:O74978"/>
<dbReference type="Proteomes" id="UP000002485">
    <property type="component" value="Chromosome III"/>
</dbReference>
<dbReference type="GO" id="GO:0005730">
    <property type="term" value="C:nucleolus"/>
    <property type="evidence" value="ECO:0007005"/>
    <property type="project" value="PomBase"/>
</dbReference>
<dbReference type="GO" id="GO:0030684">
    <property type="term" value="C:preribosome"/>
    <property type="evidence" value="ECO:0000314"/>
    <property type="project" value="PomBase"/>
</dbReference>
<dbReference type="GO" id="GO:0003723">
    <property type="term" value="F:RNA binding"/>
    <property type="evidence" value="ECO:0000318"/>
    <property type="project" value="GO_Central"/>
</dbReference>
<dbReference type="GO" id="GO:1902626">
    <property type="term" value="P:assembly of large subunit precursor of preribosome"/>
    <property type="evidence" value="ECO:0000269"/>
    <property type="project" value="PomBase"/>
</dbReference>
<dbReference type="CDD" id="cd12307">
    <property type="entry name" value="RRM_NIFK_like"/>
    <property type="match status" value="1"/>
</dbReference>
<dbReference type="Gene3D" id="3.30.70.330">
    <property type="match status" value="1"/>
</dbReference>
<dbReference type="InterPro" id="IPR012677">
    <property type="entry name" value="Nucleotide-bd_a/b_plait_sf"/>
</dbReference>
<dbReference type="InterPro" id="IPR035979">
    <property type="entry name" value="RBD_domain_sf"/>
</dbReference>
<dbReference type="InterPro" id="IPR000504">
    <property type="entry name" value="RRM_dom"/>
</dbReference>
<dbReference type="PANTHER" id="PTHR46754">
    <property type="entry name" value="MKI67 FHA DOMAIN-INTERACTING NUCLEOLAR PHOSPHOPROTEIN"/>
    <property type="match status" value="1"/>
</dbReference>
<dbReference type="Pfam" id="PF00076">
    <property type="entry name" value="RRM_1"/>
    <property type="match status" value="1"/>
</dbReference>
<dbReference type="SMART" id="SM00360">
    <property type="entry name" value="RRM"/>
    <property type="match status" value="1"/>
</dbReference>
<dbReference type="SUPFAM" id="SSF54928">
    <property type="entry name" value="RNA-binding domain, RBD"/>
    <property type="match status" value="1"/>
</dbReference>
<dbReference type="PROSITE" id="PS50102">
    <property type="entry name" value="RRM"/>
    <property type="match status" value="1"/>
</dbReference>
<gene>
    <name type="ORF">SPCC1827.05c</name>
</gene>
<sequence>MSKAKSPIKSSKKSVNQPKSVLREKKVKDAEKAEHISLQGHVDNSDEEGQDKEFFPGFGSSDDDEEDSPNALVNTSRQIMDLGEDAEKTIKKKVSENKNLQKKKGVLYVGRLPHGFYEKQMRMYFSQFGPVLRLRMSRNRKTGSSKHYAFIEFESLDVANVVAETMHNYLLYGKLLQCKVIPEDQVHENMFKGADVPFKRIPHATIARLQHEKPLSKEKADKLITRHNRKLKLKKRKLKELGITLESDVSHPKAASPVASKKSSKKKNKKVLAAHK</sequence>
<organism>
    <name type="scientific">Schizosaccharomyces pombe (strain 972 / ATCC 24843)</name>
    <name type="common">Fission yeast</name>
    <dbReference type="NCBI Taxonomy" id="284812"/>
    <lineage>
        <taxon>Eukaryota</taxon>
        <taxon>Fungi</taxon>
        <taxon>Dikarya</taxon>
        <taxon>Ascomycota</taxon>
        <taxon>Taphrinomycotina</taxon>
        <taxon>Schizosaccharomycetes</taxon>
        <taxon>Schizosaccharomycetales</taxon>
        <taxon>Schizosaccharomycetaceae</taxon>
        <taxon>Schizosaccharomyces</taxon>
    </lineage>
</organism>
<protein>
    <recommendedName>
        <fullName>Uncharacterized RNA-binding protein C1827.05c</fullName>
    </recommendedName>
</protein>
<name>YQL5_SCHPO</name>
<proteinExistence type="evidence at protein level"/>
<accession>O74978</accession>
<evidence type="ECO:0000255" key="1">
    <source>
        <dbReference type="PROSITE-ProRule" id="PRU00176"/>
    </source>
</evidence>
<evidence type="ECO:0000256" key="2">
    <source>
        <dbReference type="SAM" id="MobiDB-lite"/>
    </source>
</evidence>
<evidence type="ECO:0000269" key="3">
    <source>
    </source>
</evidence>
<evidence type="ECO:0007829" key="4">
    <source>
        <dbReference type="PDB" id="8EUP"/>
    </source>
</evidence>
<evidence type="ECO:0007829" key="5">
    <source>
        <dbReference type="PDB" id="8EUY"/>
    </source>
</evidence>
<keyword id="KW-0002">3D-structure</keyword>
<keyword id="KW-0539">Nucleus</keyword>
<keyword id="KW-1185">Reference proteome</keyword>
<keyword id="KW-0694">RNA-binding</keyword>
<reference key="1">
    <citation type="journal article" date="2002" name="Nature">
        <title>The genome sequence of Schizosaccharomyces pombe.</title>
        <authorList>
            <person name="Wood V."/>
            <person name="Gwilliam R."/>
            <person name="Rajandream M.A."/>
            <person name="Lyne M.H."/>
            <person name="Lyne R."/>
            <person name="Stewart A."/>
            <person name="Sgouros J.G."/>
            <person name="Peat N."/>
            <person name="Hayles J."/>
            <person name="Baker S.G."/>
            <person name="Basham D."/>
            <person name="Bowman S."/>
            <person name="Brooks K."/>
            <person name="Brown D."/>
            <person name="Brown S."/>
            <person name="Chillingworth T."/>
            <person name="Churcher C.M."/>
            <person name="Collins M."/>
            <person name="Connor R."/>
            <person name="Cronin A."/>
            <person name="Davis P."/>
            <person name="Feltwell T."/>
            <person name="Fraser A."/>
            <person name="Gentles S."/>
            <person name="Goble A."/>
            <person name="Hamlin N."/>
            <person name="Harris D.E."/>
            <person name="Hidalgo J."/>
            <person name="Hodgson G."/>
            <person name="Holroyd S."/>
            <person name="Hornsby T."/>
            <person name="Howarth S."/>
            <person name="Huckle E.J."/>
            <person name="Hunt S."/>
            <person name="Jagels K."/>
            <person name="James K.D."/>
            <person name="Jones L."/>
            <person name="Jones M."/>
            <person name="Leather S."/>
            <person name="McDonald S."/>
            <person name="McLean J."/>
            <person name="Mooney P."/>
            <person name="Moule S."/>
            <person name="Mungall K.L."/>
            <person name="Murphy L.D."/>
            <person name="Niblett D."/>
            <person name="Odell C."/>
            <person name="Oliver K."/>
            <person name="O'Neil S."/>
            <person name="Pearson D."/>
            <person name="Quail M.A."/>
            <person name="Rabbinowitsch E."/>
            <person name="Rutherford K.M."/>
            <person name="Rutter S."/>
            <person name="Saunders D."/>
            <person name="Seeger K."/>
            <person name="Sharp S."/>
            <person name="Skelton J."/>
            <person name="Simmonds M.N."/>
            <person name="Squares R."/>
            <person name="Squares S."/>
            <person name="Stevens K."/>
            <person name="Taylor K."/>
            <person name="Taylor R.G."/>
            <person name="Tivey A."/>
            <person name="Walsh S.V."/>
            <person name="Warren T."/>
            <person name="Whitehead S."/>
            <person name="Woodward J.R."/>
            <person name="Volckaert G."/>
            <person name="Aert R."/>
            <person name="Robben J."/>
            <person name="Grymonprez B."/>
            <person name="Weltjens I."/>
            <person name="Vanstreels E."/>
            <person name="Rieger M."/>
            <person name="Schaefer M."/>
            <person name="Mueller-Auer S."/>
            <person name="Gabel C."/>
            <person name="Fuchs M."/>
            <person name="Duesterhoeft A."/>
            <person name="Fritzc C."/>
            <person name="Holzer E."/>
            <person name="Moestl D."/>
            <person name="Hilbert H."/>
            <person name="Borzym K."/>
            <person name="Langer I."/>
            <person name="Beck A."/>
            <person name="Lehrach H."/>
            <person name="Reinhardt R."/>
            <person name="Pohl T.M."/>
            <person name="Eger P."/>
            <person name="Zimmermann W."/>
            <person name="Wedler H."/>
            <person name="Wambutt R."/>
            <person name="Purnelle B."/>
            <person name="Goffeau A."/>
            <person name="Cadieu E."/>
            <person name="Dreano S."/>
            <person name="Gloux S."/>
            <person name="Lelaure V."/>
            <person name="Mottier S."/>
            <person name="Galibert F."/>
            <person name="Aves S.J."/>
            <person name="Xiang Z."/>
            <person name="Hunt C."/>
            <person name="Moore K."/>
            <person name="Hurst S.M."/>
            <person name="Lucas M."/>
            <person name="Rochet M."/>
            <person name="Gaillardin C."/>
            <person name="Tallada V.A."/>
            <person name="Garzon A."/>
            <person name="Thode G."/>
            <person name="Daga R.R."/>
            <person name="Cruzado L."/>
            <person name="Jimenez J."/>
            <person name="Sanchez M."/>
            <person name="del Rey F."/>
            <person name="Benito J."/>
            <person name="Dominguez A."/>
            <person name="Revuelta J.L."/>
            <person name="Moreno S."/>
            <person name="Armstrong J."/>
            <person name="Forsburg S.L."/>
            <person name="Cerutti L."/>
            <person name="Lowe T."/>
            <person name="McCombie W.R."/>
            <person name="Paulsen I."/>
            <person name="Potashkin J."/>
            <person name="Shpakovski G.V."/>
            <person name="Ussery D."/>
            <person name="Barrell B.G."/>
            <person name="Nurse P."/>
        </authorList>
    </citation>
    <scope>NUCLEOTIDE SEQUENCE [LARGE SCALE GENOMIC DNA]</scope>
    <source>
        <strain>972 / ATCC 24843</strain>
    </source>
</reference>
<reference key="2">
    <citation type="journal article" date="2006" name="Nat. Biotechnol.">
        <title>ORFeome cloning and global analysis of protein localization in the fission yeast Schizosaccharomyces pombe.</title>
        <authorList>
            <person name="Matsuyama A."/>
            <person name="Arai R."/>
            <person name="Yashiroda Y."/>
            <person name="Shirai A."/>
            <person name="Kamata A."/>
            <person name="Sekido S."/>
            <person name="Kobayashi Y."/>
            <person name="Hashimoto A."/>
            <person name="Hamamoto M."/>
            <person name="Hiraoka Y."/>
            <person name="Horinouchi S."/>
            <person name="Yoshida M."/>
        </authorList>
    </citation>
    <scope>SUBCELLULAR LOCATION [LARGE SCALE ANALYSIS]</scope>
</reference>
<comment type="subcellular location">
    <subcellularLocation>
        <location evidence="3">Nucleus</location>
        <location evidence="3">Nucleolus</location>
    </subcellularLocation>
</comment>
<feature type="chain" id="PRO_0000310821" description="Uncharacterized RNA-binding protein C1827.05c">
    <location>
        <begin position="1"/>
        <end position="276"/>
    </location>
</feature>
<feature type="domain" description="RRM" evidence="1">
    <location>
        <begin position="105"/>
        <end position="183"/>
    </location>
</feature>
<feature type="region of interest" description="Disordered" evidence="2">
    <location>
        <begin position="1"/>
        <end position="70"/>
    </location>
</feature>
<feature type="region of interest" description="Disordered" evidence="2">
    <location>
        <begin position="249"/>
        <end position="276"/>
    </location>
</feature>
<feature type="compositionally biased region" description="Basic and acidic residues" evidence="2">
    <location>
        <begin position="21"/>
        <end position="35"/>
    </location>
</feature>
<feature type="compositionally biased region" description="Low complexity" evidence="2">
    <location>
        <begin position="252"/>
        <end position="261"/>
    </location>
</feature>
<feature type="compositionally biased region" description="Basic residues" evidence="2">
    <location>
        <begin position="262"/>
        <end position="276"/>
    </location>
</feature>
<feature type="strand" evidence="5">
    <location>
        <begin position="106"/>
        <end position="111"/>
    </location>
</feature>
<feature type="helix" evidence="5">
    <location>
        <begin position="118"/>
        <end position="128"/>
    </location>
</feature>
<feature type="strand" evidence="5">
    <location>
        <begin position="131"/>
        <end position="134"/>
    </location>
</feature>
<feature type="turn" evidence="5">
    <location>
        <begin position="140"/>
        <end position="142"/>
    </location>
</feature>
<feature type="strand" evidence="5">
    <location>
        <begin position="149"/>
        <end position="155"/>
    </location>
</feature>
<feature type="helix" evidence="5">
    <location>
        <begin position="156"/>
        <end position="166"/>
    </location>
</feature>
<feature type="strand" evidence="5">
    <location>
        <begin position="169"/>
        <end position="171"/>
    </location>
</feature>
<feature type="strand" evidence="5">
    <location>
        <begin position="174"/>
        <end position="181"/>
    </location>
</feature>
<feature type="turn" evidence="5">
    <location>
        <begin position="183"/>
        <end position="185"/>
    </location>
</feature>
<feature type="helix" evidence="5">
    <location>
        <begin position="189"/>
        <end position="191"/>
    </location>
</feature>
<feature type="turn" evidence="4">
    <location>
        <begin position="192"/>
        <end position="195"/>
    </location>
</feature>
<feature type="helix" evidence="5">
    <location>
        <begin position="203"/>
        <end position="210"/>
    </location>
</feature>
<feature type="helix" evidence="5">
    <location>
        <begin position="221"/>
        <end position="237"/>
    </location>
</feature>